<proteinExistence type="inferred from homology"/>
<feature type="signal peptide" evidence="1">
    <location>
        <begin position="1"/>
        <end position="27"/>
    </location>
</feature>
<feature type="chain" id="PRO_0000038206" description="Envelope glycoprotein C homolog">
    <location>
        <begin position="28"/>
        <end position="501"/>
    </location>
</feature>
<feature type="topological domain" description="Virion surface" evidence="1">
    <location>
        <begin position="28"/>
        <end position="465"/>
    </location>
</feature>
<feature type="transmembrane region" description="Helical" evidence="1">
    <location>
        <begin position="466"/>
        <end position="492"/>
    </location>
</feature>
<feature type="topological domain" description="Cytoplasmic" evidence="1">
    <location>
        <begin position="493"/>
        <end position="501"/>
    </location>
</feature>
<feature type="domain" description="Ig-like">
    <location>
        <begin position="258"/>
        <end position="356"/>
    </location>
</feature>
<feature type="region of interest" description="Disordered" evidence="2">
    <location>
        <begin position="53"/>
        <end position="86"/>
    </location>
</feature>
<feature type="compositionally biased region" description="Low complexity" evidence="2">
    <location>
        <begin position="62"/>
        <end position="72"/>
    </location>
</feature>
<feature type="glycosylation site" description="N-linked (GlcNAc...) asparagine; by host" evidence="1">
    <location>
        <position position="46"/>
    </location>
</feature>
<feature type="glycosylation site" description="N-linked (GlcNAc...) asparagine; by host" evidence="1">
    <location>
        <position position="91"/>
    </location>
</feature>
<feature type="glycosylation site" description="N-linked (GlcNAc...) asparagine; by host" evidence="1">
    <location>
        <position position="100"/>
    </location>
</feature>
<feature type="glycosylation site" description="N-linked (GlcNAc...) asparagine; by host" evidence="1">
    <location>
        <position position="120"/>
    </location>
</feature>
<feature type="glycosylation site" description="N-linked (GlcNAc...) asparagine; by host" evidence="1">
    <location>
        <position position="212"/>
    </location>
</feature>
<feature type="glycosylation site" description="N-linked (GlcNAc...) asparagine; by host" evidence="1">
    <location>
        <position position="354"/>
    </location>
</feature>
<feature type="glycosylation site" description="N-linked (GlcNAc...) asparagine; by host" evidence="1">
    <location>
        <position position="400"/>
    </location>
</feature>
<feature type="glycosylation site" description="N-linked (GlcNAc...) asparagine; by host" evidence="1">
    <location>
        <position position="429"/>
    </location>
</feature>
<name>GC_GAHVR</name>
<comment type="function">
    <text>May play an immunoevasive role in the pathogenesis of Marek's disease. It is a candidate for causing the early-stage immunosuppression that occurs after MDHV infection.</text>
</comment>
<comment type="subcellular location">
    <subcellularLocation>
        <location>Secreted</location>
    </subcellularLocation>
    <subcellularLocation>
        <location>Host cell membrane</location>
        <topology>Single-pass membrane protein</topology>
    </subcellularLocation>
    <text>Predominantly secreted. Secreted, but a small amount of mature GP57-65 is anchored in the plasma membrane or held by other interactions.</text>
</comment>
<comment type="similarity">
    <text evidence="3">Belongs to the herpesviridae glycoprotein C family.</text>
</comment>
<keyword id="KW-0325">Glycoprotein</keyword>
<keyword id="KW-1032">Host cell membrane</keyword>
<keyword id="KW-1043">Host membrane</keyword>
<keyword id="KW-0945">Host-virus interaction</keyword>
<keyword id="KW-0393">Immunoglobulin domain</keyword>
<keyword id="KW-0472">Membrane</keyword>
<keyword id="KW-0964">Secreted</keyword>
<keyword id="KW-0732">Signal</keyword>
<keyword id="KW-0812">Transmembrane</keyword>
<keyword id="KW-1133">Transmembrane helix</keyword>
<protein>
    <recommendedName>
        <fullName>Envelope glycoprotein C homolog</fullName>
    </recommendedName>
    <alternativeName>
        <fullName>A antigen</fullName>
    </alternativeName>
    <alternativeName>
        <fullName>Glycoprotein A</fullName>
        <shortName>GA</shortName>
    </alternativeName>
    <alternativeName>
        <fullName>Secretory glycoprotein GP57-65</fullName>
    </alternativeName>
</protein>
<dbReference type="GlyCosmos" id="P33500">
    <property type="glycosylation" value="8 sites, No reported glycans"/>
</dbReference>
<dbReference type="GO" id="GO:0005576">
    <property type="term" value="C:extracellular region"/>
    <property type="evidence" value="ECO:0007669"/>
    <property type="project" value="UniProtKB-SubCell"/>
</dbReference>
<dbReference type="GO" id="GO:0020002">
    <property type="term" value="C:host cell plasma membrane"/>
    <property type="evidence" value="ECO:0007669"/>
    <property type="project" value="UniProtKB-SubCell"/>
</dbReference>
<dbReference type="GO" id="GO:0016020">
    <property type="term" value="C:membrane"/>
    <property type="evidence" value="ECO:0007669"/>
    <property type="project" value="UniProtKB-KW"/>
</dbReference>
<dbReference type="InterPro" id="IPR001038">
    <property type="entry name" value="GA_GC"/>
</dbReference>
<dbReference type="InterPro" id="IPR007110">
    <property type="entry name" value="Ig-like_dom"/>
</dbReference>
<dbReference type="InterPro" id="IPR036179">
    <property type="entry name" value="Ig-like_dom_sf"/>
</dbReference>
<dbReference type="InterPro" id="IPR001654">
    <property type="entry name" value="Marek_A"/>
</dbReference>
<dbReference type="Pfam" id="PF02124">
    <property type="entry name" value="Marek_A"/>
    <property type="match status" value="1"/>
</dbReference>
<dbReference type="PRINTS" id="PR00675">
    <property type="entry name" value="MAREKSGPA"/>
</dbReference>
<dbReference type="SUPFAM" id="SSF48726">
    <property type="entry name" value="Immunoglobulin"/>
    <property type="match status" value="1"/>
</dbReference>
<dbReference type="PROSITE" id="PS50835">
    <property type="entry name" value="IG_LIKE"/>
    <property type="match status" value="1"/>
</dbReference>
<organismHost>
    <name type="scientific">Gallus gallus</name>
    <name type="common">Chicken</name>
    <dbReference type="NCBI Taxonomy" id="9031"/>
</organismHost>
<gene>
    <name type="primary">gC</name>
    <name type="ORF">GA</name>
</gene>
<sequence>MLTPRVLRALGWTGLFFLLLSPSNVLGASLSRDLETPPFLSFDPSNISINGAPLTEVPHAPSTESVSTNSESTNEHTITETTGKNAYIHNNASTDKQNANDTHKTPNILCDTEEVFVFLNETGRFVCTLKVDPPSDSEWSNFVLDLIFNPIEYHANEKNVEAARIAGLYGVPGSDYAYPRQSELISSIRRDPQGTFWTSPSPHGNKYFIWINKTTNTMGVEIRNVDYADNGYMQVIMRDHFNRPLIDKHIYIRVCQRPASVDVLAPPVLSGENYKASCIVRHFYPPGSVYVSWRQNGNIATPRKDRDGSFWWFESGRGATLVSTITLGNSGIDFPPKISCLVAWKQGDMISTTNATAIPTVYHHPRLSLAFKDGYAICTIECVPSEITVRWLVHDEAQPNTTYNTVVTGLCRTIDRHRNLLSRIPVWDNWTKTKYTCRLIGYPFDEDKFQDSEYYDATPSARGTPMVITVTAVLGLAVILGMGIIMTALCLYNSTRKNIRL</sequence>
<accession>P33500</accession>
<reference key="1">
    <citation type="journal article" date="1989" name="Virus Res.">
        <title>Nucleotide sequence of the Marek's disease virus (MDV) RB-1B A antigen gene and the identification of the MDV A antigen as the herpes simplex virus-1 glycoprotein C homologue.</title>
        <authorList>
            <person name="Binns M.M."/>
            <person name="Ross N.L.J."/>
        </authorList>
    </citation>
    <scope>NUCLEOTIDE SEQUENCE [GENOMIC DNA]</scope>
</reference>
<evidence type="ECO:0000255" key="1"/>
<evidence type="ECO:0000256" key="2">
    <source>
        <dbReference type="SAM" id="MobiDB-lite"/>
    </source>
</evidence>
<evidence type="ECO:0000305" key="3"/>
<organism>
    <name type="scientific">Gallid herpesvirus 2 (strain RB-1b)</name>
    <name type="common">GaHV-2</name>
    <name type="synonym">Marek's disease herpesvirus type 1</name>
    <dbReference type="NCBI Taxonomy" id="33707"/>
    <lineage>
        <taxon>Viruses</taxon>
        <taxon>Duplodnaviria</taxon>
        <taxon>Heunggongvirae</taxon>
        <taxon>Peploviricota</taxon>
        <taxon>Herviviricetes</taxon>
        <taxon>Herpesvirales</taxon>
        <taxon>Orthoherpesviridae</taxon>
        <taxon>Alphaherpesvirinae</taxon>
        <taxon>Mardivirus</taxon>
        <taxon>Mardivirus gallidalpha2</taxon>
        <taxon>Gallid alphaherpesvirus 2</taxon>
    </lineage>
</organism>